<name>ATPG_NEIM0</name>
<accession>A9M122</accession>
<protein>
    <recommendedName>
        <fullName evidence="1">ATP synthase gamma chain</fullName>
    </recommendedName>
    <alternativeName>
        <fullName evidence="1">ATP synthase F1 sector gamma subunit</fullName>
    </alternativeName>
    <alternativeName>
        <fullName evidence="1">F-ATPase gamma subunit</fullName>
    </alternativeName>
</protein>
<feature type="chain" id="PRO_1000083796" description="ATP synthase gamma chain">
    <location>
        <begin position="1"/>
        <end position="291"/>
    </location>
</feature>
<evidence type="ECO:0000255" key="1">
    <source>
        <dbReference type="HAMAP-Rule" id="MF_00815"/>
    </source>
</evidence>
<reference key="1">
    <citation type="journal article" date="2008" name="Genomics">
        <title>Characterization of ST-4821 complex, a unique Neisseria meningitidis clone.</title>
        <authorList>
            <person name="Peng J."/>
            <person name="Yang L."/>
            <person name="Yang F."/>
            <person name="Yang J."/>
            <person name="Yan Y."/>
            <person name="Nie H."/>
            <person name="Zhang X."/>
            <person name="Xiong Z."/>
            <person name="Jiang Y."/>
            <person name="Cheng F."/>
            <person name="Xu X."/>
            <person name="Chen S."/>
            <person name="Sun L."/>
            <person name="Li W."/>
            <person name="Shen Y."/>
            <person name="Shao Z."/>
            <person name="Liang X."/>
            <person name="Xu J."/>
            <person name="Jin Q."/>
        </authorList>
    </citation>
    <scope>NUCLEOTIDE SEQUENCE [LARGE SCALE GENOMIC DNA]</scope>
    <source>
        <strain>053442</strain>
    </source>
</reference>
<organism>
    <name type="scientific">Neisseria meningitidis serogroup C (strain 053442)</name>
    <dbReference type="NCBI Taxonomy" id="374833"/>
    <lineage>
        <taxon>Bacteria</taxon>
        <taxon>Pseudomonadati</taxon>
        <taxon>Pseudomonadota</taxon>
        <taxon>Betaproteobacteria</taxon>
        <taxon>Neisseriales</taxon>
        <taxon>Neisseriaceae</taxon>
        <taxon>Neisseria</taxon>
    </lineage>
</organism>
<proteinExistence type="inferred from homology"/>
<sequence>MAVGKEILTKIRSVQNTQKITKAMQMVSTSKMRKTQERMRLARPYAEKVRMVMSHLAQTNTDHGIPLLESHREIRRVGFILITSDKGLCGGLNANVLKKFLAQVQEYRNQGIEEEIVCLGSKGLMACQSIGLNVVASAVNLGDTPKMEMLLGPLTELFQRYEKHEIDRIHLVYSGFVNTMRQEPRMEVLLPIGENVIGDSAPKSPFSWEYRYEPTALAVLEYLVRRYLESVVYQALSDNMASEQAARMVAMKAATDNAGNAIKELRLVYNKSRQAAITTELSEIVAGAAAV</sequence>
<dbReference type="EMBL" id="CP000381">
    <property type="protein sequence ID" value="ABX72491.1"/>
    <property type="molecule type" value="Genomic_DNA"/>
</dbReference>
<dbReference type="RefSeq" id="WP_002218049.1">
    <property type="nucleotide sequence ID" value="NC_010120.1"/>
</dbReference>
<dbReference type="SMR" id="A9M122"/>
<dbReference type="KEGG" id="nmn:NMCC_0283"/>
<dbReference type="HOGENOM" id="CLU_050669_0_1_4"/>
<dbReference type="Proteomes" id="UP000001177">
    <property type="component" value="Chromosome"/>
</dbReference>
<dbReference type="GO" id="GO:0005886">
    <property type="term" value="C:plasma membrane"/>
    <property type="evidence" value="ECO:0007669"/>
    <property type="project" value="UniProtKB-SubCell"/>
</dbReference>
<dbReference type="GO" id="GO:0045259">
    <property type="term" value="C:proton-transporting ATP synthase complex"/>
    <property type="evidence" value="ECO:0007669"/>
    <property type="project" value="UniProtKB-KW"/>
</dbReference>
<dbReference type="GO" id="GO:0005524">
    <property type="term" value="F:ATP binding"/>
    <property type="evidence" value="ECO:0007669"/>
    <property type="project" value="UniProtKB-UniRule"/>
</dbReference>
<dbReference type="GO" id="GO:0046933">
    <property type="term" value="F:proton-transporting ATP synthase activity, rotational mechanism"/>
    <property type="evidence" value="ECO:0007669"/>
    <property type="project" value="UniProtKB-UniRule"/>
</dbReference>
<dbReference type="GO" id="GO:0042777">
    <property type="term" value="P:proton motive force-driven plasma membrane ATP synthesis"/>
    <property type="evidence" value="ECO:0007669"/>
    <property type="project" value="UniProtKB-UniRule"/>
</dbReference>
<dbReference type="CDD" id="cd12151">
    <property type="entry name" value="F1-ATPase_gamma"/>
    <property type="match status" value="1"/>
</dbReference>
<dbReference type="FunFam" id="1.10.287.80:FF:000005">
    <property type="entry name" value="ATP synthase gamma chain"/>
    <property type="match status" value="1"/>
</dbReference>
<dbReference type="FunFam" id="3.40.1380.10:FF:000008">
    <property type="entry name" value="ATP synthase gamma chain"/>
    <property type="match status" value="1"/>
</dbReference>
<dbReference type="Gene3D" id="3.40.1380.10">
    <property type="match status" value="1"/>
</dbReference>
<dbReference type="Gene3D" id="1.10.287.80">
    <property type="entry name" value="ATP synthase, gamma subunit, helix hairpin domain"/>
    <property type="match status" value="1"/>
</dbReference>
<dbReference type="HAMAP" id="MF_00815">
    <property type="entry name" value="ATP_synth_gamma_bact"/>
    <property type="match status" value="1"/>
</dbReference>
<dbReference type="InterPro" id="IPR035968">
    <property type="entry name" value="ATP_synth_F1_ATPase_gsu"/>
</dbReference>
<dbReference type="InterPro" id="IPR000131">
    <property type="entry name" value="ATP_synth_F1_gsu"/>
</dbReference>
<dbReference type="InterPro" id="IPR023632">
    <property type="entry name" value="ATP_synth_F1_gsu_CS"/>
</dbReference>
<dbReference type="NCBIfam" id="TIGR01146">
    <property type="entry name" value="ATPsyn_F1gamma"/>
    <property type="match status" value="1"/>
</dbReference>
<dbReference type="NCBIfam" id="NF004144">
    <property type="entry name" value="PRK05621.1-1"/>
    <property type="match status" value="1"/>
</dbReference>
<dbReference type="PANTHER" id="PTHR11693">
    <property type="entry name" value="ATP SYNTHASE GAMMA CHAIN"/>
    <property type="match status" value="1"/>
</dbReference>
<dbReference type="PANTHER" id="PTHR11693:SF22">
    <property type="entry name" value="ATP SYNTHASE SUBUNIT GAMMA, MITOCHONDRIAL"/>
    <property type="match status" value="1"/>
</dbReference>
<dbReference type="Pfam" id="PF00231">
    <property type="entry name" value="ATP-synt"/>
    <property type="match status" value="1"/>
</dbReference>
<dbReference type="PRINTS" id="PR00126">
    <property type="entry name" value="ATPASEGAMMA"/>
</dbReference>
<dbReference type="SUPFAM" id="SSF52943">
    <property type="entry name" value="ATP synthase (F1-ATPase), gamma subunit"/>
    <property type="match status" value="1"/>
</dbReference>
<dbReference type="PROSITE" id="PS00153">
    <property type="entry name" value="ATPASE_GAMMA"/>
    <property type="match status" value="1"/>
</dbReference>
<keyword id="KW-0066">ATP synthesis</keyword>
<keyword id="KW-0997">Cell inner membrane</keyword>
<keyword id="KW-1003">Cell membrane</keyword>
<keyword id="KW-0139">CF(1)</keyword>
<keyword id="KW-0375">Hydrogen ion transport</keyword>
<keyword id="KW-0406">Ion transport</keyword>
<keyword id="KW-0472">Membrane</keyword>
<keyword id="KW-0813">Transport</keyword>
<comment type="function">
    <text evidence="1">Produces ATP from ADP in the presence of a proton gradient across the membrane. The gamma chain is believed to be important in regulating ATPase activity and the flow of protons through the CF(0) complex.</text>
</comment>
<comment type="subunit">
    <text evidence="1">F-type ATPases have 2 components, CF(1) - the catalytic core - and CF(0) - the membrane proton channel. CF(1) has five subunits: alpha(3), beta(3), gamma(1), delta(1), epsilon(1). CF(0) has three main subunits: a, b and c.</text>
</comment>
<comment type="subcellular location">
    <subcellularLocation>
        <location evidence="1">Cell inner membrane</location>
        <topology evidence="1">Peripheral membrane protein</topology>
    </subcellularLocation>
</comment>
<comment type="similarity">
    <text evidence="1">Belongs to the ATPase gamma chain family.</text>
</comment>
<gene>
    <name evidence="1" type="primary">atpG</name>
    <name type="ordered locus">NMCC_0283</name>
</gene>